<dbReference type="EC" id="2.7.11.13"/>
<dbReference type="EMBL" id="D14338">
    <property type="protein sequence ID" value="BAA03268.1"/>
    <property type="molecule type" value="Genomic_DNA"/>
</dbReference>
<dbReference type="EMBL" id="L07637">
    <property type="protein sequence ID" value="AAA35323.1"/>
    <property type="molecule type" value="Genomic_DNA"/>
</dbReference>
<dbReference type="EMBL" id="CU329671">
    <property type="protein sequence ID" value="CAA22678.1"/>
    <property type="molecule type" value="Genomic_DNA"/>
</dbReference>
<dbReference type="EMBL" id="AB027824">
    <property type="protein sequence ID" value="BAA87128.1"/>
    <property type="molecule type" value="Genomic_DNA"/>
</dbReference>
<dbReference type="PIR" id="A46079">
    <property type="entry name" value="A46079"/>
</dbReference>
<dbReference type="RefSeq" id="NP_595950.1">
    <property type="nucleotide sequence ID" value="NM_001021859.2"/>
</dbReference>
<dbReference type="SMR" id="P36583"/>
<dbReference type="BioGRID" id="276204">
    <property type="interactions" value="35"/>
</dbReference>
<dbReference type="FunCoup" id="P36583">
    <property type="interactions" value="212"/>
</dbReference>
<dbReference type="STRING" id="284812.P36583"/>
<dbReference type="iPTMnet" id="P36583"/>
<dbReference type="PaxDb" id="4896-SPBC12D12.04c.1"/>
<dbReference type="EnsemblFungi" id="SPBC12D12.04c.1">
    <property type="protein sequence ID" value="SPBC12D12.04c.1:pep"/>
    <property type="gene ID" value="SPBC12D12.04c"/>
</dbReference>
<dbReference type="GeneID" id="2539649"/>
<dbReference type="KEGG" id="spo:2539649"/>
<dbReference type="PomBase" id="SPBC12D12.04c">
    <property type="gene designation" value="pck2"/>
</dbReference>
<dbReference type="VEuPathDB" id="FungiDB:SPBC12D12.04c"/>
<dbReference type="eggNOG" id="KOG0694">
    <property type="taxonomic scope" value="Eukaryota"/>
</dbReference>
<dbReference type="HOGENOM" id="CLU_000288_54_1_1"/>
<dbReference type="InParanoid" id="P36583"/>
<dbReference type="OMA" id="QCTHLVP"/>
<dbReference type="PhylomeDB" id="P36583"/>
<dbReference type="BRENDA" id="2.7.11.13">
    <property type="organism ID" value="5613"/>
</dbReference>
<dbReference type="Reactome" id="R-SPO-114508">
    <property type="pathway name" value="Effects of PIP2 hydrolysis"/>
</dbReference>
<dbReference type="Reactome" id="R-SPO-114516">
    <property type="pathway name" value="Disinhibition of SNARE formation"/>
</dbReference>
<dbReference type="Reactome" id="R-SPO-1169091">
    <property type="pathway name" value="Activation of NF-kappaB in B cells"/>
</dbReference>
<dbReference type="Reactome" id="R-SPO-1489509">
    <property type="pathway name" value="DAG and IP3 signaling"/>
</dbReference>
<dbReference type="Reactome" id="R-SPO-202424">
    <property type="pathway name" value="Downstream TCR signaling"/>
</dbReference>
<dbReference type="Reactome" id="R-SPO-2029485">
    <property type="pathway name" value="Role of phospholipids in phagocytosis"/>
</dbReference>
<dbReference type="Reactome" id="R-SPO-2179392">
    <property type="pathway name" value="EGFR Transactivation by Gastrin"/>
</dbReference>
<dbReference type="Reactome" id="R-SPO-2871837">
    <property type="pathway name" value="FCERI mediated NF-kB activation"/>
</dbReference>
<dbReference type="Reactome" id="R-SPO-399997">
    <property type="pathway name" value="Acetylcholine regulates insulin secretion"/>
</dbReference>
<dbReference type="Reactome" id="R-SPO-4419969">
    <property type="pathway name" value="Depolymerization of the Nuclear Lamina"/>
</dbReference>
<dbReference type="Reactome" id="R-SPO-5218921">
    <property type="pathway name" value="VEGFR2 mediated cell proliferation"/>
</dbReference>
<dbReference type="Reactome" id="R-SPO-5607764">
    <property type="pathway name" value="CLEC7A (Dectin-1) signaling"/>
</dbReference>
<dbReference type="Reactome" id="R-SPO-5625740">
    <property type="pathway name" value="RHO GTPases activate PKNs"/>
</dbReference>
<dbReference type="Reactome" id="R-SPO-5625886">
    <property type="pathway name" value="Activated PKN1 stimulates transcription of AR (androgen receptor) regulated genes KLK2 and KLK3"/>
</dbReference>
<dbReference type="Reactome" id="R-SPO-5668599">
    <property type="pathway name" value="RHO GTPases Activate NADPH Oxidases"/>
</dbReference>
<dbReference type="Reactome" id="R-SPO-6798695">
    <property type="pathway name" value="Neutrophil degranulation"/>
</dbReference>
<dbReference type="Reactome" id="R-SPO-76005">
    <property type="pathway name" value="Response to elevated platelet cytosolic Ca2+"/>
</dbReference>
<dbReference type="Reactome" id="R-SPO-8980692">
    <property type="pathway name" value="RHOA GTPase cycle"/>
</dbReference>
<dbReference type="Reactome" id="R-SPO-9013026">
    <property type="pathway name" value="RHOB GTPase cycle"/>
</dbReference>
<dbReference type="Reactome" id="R-SPO-9013106">
    <property type="pathway name" value="RHOC GTPase cycle"/>
</dbReference>
<dbReference type="Reactome" id="R-SPO-9634635">
    <property type="pathway name" value="Estrogen-stimulated signaling through PRKCZ"/>
</dbReference>
<dbReference type="Reactome" id="R-SPO-9856530">
    <property type="pathway name" value="High laminar flow shear stress activates signaling by PIEZO1 and PECAM1:CDH5:KDR in endothelial cells"/>
</dbReference>
<dbReference type="PRO" id="PR:P36583"/>
<dbReference type="Proteomes" id="UP000002485">
    <property type="component" value="Chromosome II"/>
</dbReference>
<dbReference type="GO" id="GO:0032153">
    <property type="term" value="C:cell division site"/>
    <property type="evidence" value="ECO:0007005"/>
    <property type="project" value="PomBase"/>
</dbReference>
<dbReference type="GO" id="GO:0051286">
    <property type="term" value="C:cell tip"/>
    <property type="evidence" value="ECO:0007005"/>
    <property type="project" value="PomBase"/>
</dbReference>
<dbReference type="GO" id="GO:0000935">
    <property type="term" value="C:division septum"/>
    <property type="evidence" value="ECO:0000314"/>
    <property type="project" value="PomBase"/>
</dbReference>
<dbReference type="GO" id="GO:0005524">
    <property type="term" value="F:ATP binding"/>
    <property type="evidence" value="ECO:0007669"/>
    <property type="project" value="UniProtKB-KW"/>
</dbReference>
<dbReference type="GO" id="GO:0004697">
    <property type="term" value="F:diacylglycerol-dependent serine/threonine kinase activity"/>
    <property type="evidence" value="ECO:0000304"/>
    <property type="project" value="PomBase"/>
</dbReference>
<dbReference type="GO" id="GO:0008289">
    <property type="term" value="F:lipid binding"/>
    <property type="evidence" value="ECO:0000255"/>
    <property type="project" value="PomBase"/>
</dbReference>
<dbReference type="GO" id="GO:0106310">
    <property type="term" value="F:protein serine kinase activity"/>
    <property type="evidence" value="ECO:0007669"/>
    <property type="project" value="RHEA"/>
</dbReference>
<dbReference type="GO" id="GO:0004674">
    <property type="term" value="F:protein serine/threonine kinase activity"/>
    <property type="evidence" value="ECO:0000318"/>
    <property type="project" value="GO_Central"/>
</dbReference>
<dbReference type="GO" id="GO:0008270">
    <property type="term" value="F:zinc ion binding"/>
    <property type="evidence" value="ECO:0007669"/>
    <property type="project" value="UniProtKB-KW"/>
</dbReference>
<dbReference type="GO" id="GO:0009272">
    <property type="term" value="P:fungal-type cell wall biogenesis"/>
    <property type="evidence" value="ECO:0000315"/>
    <property type="project" value="PomBase"/>
</dbReference>
<dbReference type="GO" id="GO:0035556">
    <property type="term" value="P:intracellular signal transduction"/>
    <property type="evidence" value="ECO:0000318"/>
    <property type="project" value="GO_Central"/>
</dbReference>
<dbReference type="GO" id="GO:1902660">
    <property type="term" value="P:negative regulation of glucose mediated signaling pathway"/>
    <property type="evidence" value="ECO:0000315"/>
    <property type="project" value="PomBase"/>
</dbReference>
<dbReference type="GO" id="GO:1903139">
    <property type="term" value="P:positive regulation of cell integrity MAPK cascade"/>
    <property type="evidence" value="ECO:0000315"/>
    <property type="project" value="PomBase"/>
</dbReference>
<dbReference type="GO" id="GO:0032956">
    <property type="term" value="P:regulation of actin cytoskeleton organization"/>
    <property type="evidence" value="ECO:0000269"/>
    <property type="project" value="PomBase"/>
</dbReference>
<dbReference type="GO" id="GO:0090334">
    <property type="term" value="P:regulation of cell wall (1-&gt;3)-beta-D-glucan biosynthetic process"/>
    <property type="evidence" value="ECO:0000315"/>
    <property type="project" value="PomBase"/>
</dbReference>
<dbReference type="GO" id="GO:2000769">
    <property type="term" value="P:regulation of establishment or maintenance of cell polarity regulating cell shape"/>
    <property type="evidence" value="ECO:0000315"/>
    <property type="project" value="PomBase"/>
</dbReference>
<dbReference type="GO" id="GO:0070610">
    <property type="term" value="P:regulation of fungal-type cell wall (1-&gt;3)-alpha-glucan biosynthetic process"/>
    <property type="evidence" value="ECO:0000315"/>
    <property type="project" value="PomBase"/>
</dbReference>
<dbReference type="CDD" id="cd20822">
    <property type="entry name" value="C1_ScPKC1-like_rpt1"/>
    <property type="match status" value="1"/>
</dbReference>
<dbReference type="CDD" id="cd20823">
    <property type="entry name" value="C1_ScPKC1-like_rpt2"/>
    <property type="match status" value="1"/>
</dbReference>
<dbReference type="CDD" id="cd08689">
    <property type="entry name" value="C2_fungal_Pkc1p"/>
    <property type="match status" value="1"/>
</dbReference>
<dbReference type="CDD" id="cd11621">
    <property type="entry name" value="HR1_PKC-like_1_fungi"/>
    <property type="match status" value="1"/>
</dbReference>
<dbReference type="CDD" id="cd11620">
    <property type="entry name" value="HR1_PKC-like_2_fungi"/>
    <property type="match status" value="1"/>
</dbReference>
<dbReference type="CDD" id="cd05570">
    <property type="entry name" value="STKc_PKC"/>
    <property type="match status" value="1"/>
</dbReference>
<dbReference type="FunFam" id="1.10.287.160:FF:000004">
    <property type="entry name" value="Protein kinase C"/>
    <property type="match status" value="1"/>
</dbReference>
<dbReference type="FunFam" id="1.10.510.10:FF:000101">
    <property type="entry name" value="Protein kinase C"/>
    <property type="match status" value="1"/>
</dbReference>
<dbReference type="FunFam" id="3.30.200.20:FF:000103">
    <property type="entry name" value="Protein kinase C"/>
    <property type="match status" value="1"/>
</dbReference>
<dbReference type="FunFam" id="3.30.60.20:FF:000014">
    <property type="entry name" value="Protein kinase C"/>
    <property type="match status" value="1"/>
</dbReference>
<dbReference type="FunFam" id="3.30.60.20:FF:000034">
    <property type="entry name" value="Protein kinase C"/>
    <property type="match status" value="1"/>
</dbReference>
<dbReference type="Gene3D" id="3.30.60.20">
    <property type="match status" value="2"/>
</dbReference>
<dbReference type="Gene3D" id="1.10.287.160">
    <property type="entry name" value="HR1 repeat"/>
    <property type="match status" value="1"/>
</dbReference>
<dbReference type="Gene3D" id="3.30.200.20">
    <property type="entry name" value="Phosphorylase Kinase, domain 1"/>
    <property type="match status" value="1"/>
</dbReference>
<dbReference type="Gene3D" id="1.10.510.10">
    <property type="entry name" value="Transferase(Phosphotransferase) domain 1"/>
    <property type="match status" value="1"/>
</dbReference>
<dbReference type="InterPro" id="IPR000961">
    <property type="entry name" value="AGC-kinase_C"/>
</dbReference>
<dbReference type="InterPro" id="IPR046349">
    <property type="entry name" value="C1-like_sf"/>
</dbReference>
<dbReference type="InterPro" id="IPR000008">
    <property type="entry name" value="C2_dom"/>
</dbReference>
<dbReference type="InterPro" id="IPR035892">
    <property type="entry name" value="C2_domain_sf"/>
</dbReference>
<dbReference type="InterPro" id="IPR037778">
    <property type="entry name" value="C2_fungal_PKC"/>
</dbReference>
<dbReference type="InterPro" id="IPR011072">
    <property type="entry name" value="HR1_rho-bd"/>
</dbReference>
<dbReference type="InterPro" id="IPR036274">
    <property type="entry name" value="HR1_rpt_sf"/>
</dbReference>
<dbReference type="InterPro" id="IPR011009">
    <property type="entry name" value="Kinase-like_dom_sf"/>
</dbReference>
<dbReference type="InterPro" id="IPR002219">
    <property type="entry name" value="PE/DAG-bd"/>
</dbReference>
<dbReference type="InterPro" id="IPR037312">
    <property type="entry name" value="PKC-like_HR1"/>
</dbReference>
<dbReference type="InterPro" id="IPR017892">
    <property type="entry name" value="Pkinase_C"/>
</dbReference>
<dbReference type="InterPro" id="IPR000719">
    <property type="entry name" value="Prot_kinase_dom"/>
</dbReference>
<dbReference type="InterPro" id="IPR017441">
    <property type="entry name" value="Protein_kinase_ATP_BS"/>
</dbReference>
<dbReference type="InterPro" id="IPR008271">
    <property type="entry name" value="Ser/Thr_kinase_AS"/>
</dbReference>
<dbReference type="PANTHER" id="PTHR24351">
    <property type="entry name" value="RIBOSOMAL PROTEIN S6 KINASE"/>
    <property type="match status" value="1"/>
</dbReference>
<dbReference type="Pfam" id="PF00130">
    <property type="entry name" value="C1_1"/>
    <property type="match status" value="2"/>
</dbReference>
<dbReference type="Pfam" id="PF02185">
    <property type="entry name" value="HR1"/>
    <property type="match status" value="2"/>
</dbReference>
<dbReference type="Pfam" id="PF00069">
    <property type="entry name" value="Pkinase"/>
    <property type="match status" value="1"/>
</dbReference>
<dbReference type="Pfam" id="PF00433">
    <property type="entry name" value="Pkinase_C"/>
    <property type="match status" value="1"/>
</dbReference>
<dbReference type="SMART" id="SM00109">
    <property type="entry name" value="C1"/>
    <property type="match status" value="2"/>
</dbReference>
<dbReference type="SMART" id="SM00239">
    <property type="entry name" value="C2"/>
    <property type="match status" value="1"/>
</dbReference>
<dbReference type="SMART" id="SM00742">
    <property type="entry name" value="Hr1"/>
    <property type="match status" value="2"/>
</dbReference>
<dbReference type="SMART" id="SM00133">
    <property type="entry name" value="S_TK_X"/>
    <property type="match status" value="1"/>
</dbReference>
<dbReference type="SMART" id="SM00220">
    <property type="entry name" value="S_TKc"/>
    <property type="match status" value="1"/>
</dbReference>
<dbReference type="SUPFAM" id="SSF49562">
    <property type="entry name" value="C2 domain (Calcium/lipid-binding domain, CaLB)"/>
    <property type="match status" value="1"/>
</dbReference>
<dbReference type="SUPFAM" id="SSF57889">
    <property type="entry name" value="Cysteine-rich domain"/>
    <property type="match status" value="2"/>
</dbReference>
<dbReference type="SUPFAM" id="SSF46585">
    <property type="entry name" value="HR1 repeat"/>
    <property type="match status" value="1"/>
</dbReference>
<dbReference type="SUPFAM" id="SSF56112">
    <property type="entry name" value="Protein kinase-like (PK-like)"/>
    <property type="match status" value="1"/>
</dbReference>
<dbReference type="PROSITE" id="PS51285">
    <property type="entry name" value="AGC_KINASE_CTER"/>
    <property type="match status" value="1"/>
</dbReference>
<dbReference type="PROSITE" id="PS50004">
    <property type="entry name" value="C2"/>
    <property type="match status" value="1"/>
</dbReference>
<dbReference type="PROSITE" id="PS00107">
    <property type="entry name" value="PROTEIN_KINASE_ATP"/>
    <property type="match status" value="1"/>
</dbReference>
<dbReference type="PROSITE" id="PS50011">
    <property type="entry name" value="PROTEIN_KINASE_DOM"/>
    <property type="match status" value="1"/>
</dbReference>
<dbReference type="PROSITE" id="PS00108">
    <property type="entry name" value="PROTEIN_KINASE_ST"/>
    <property type="match status" value="1"/>
</dbReference>
<dbReference type="PROSITE" id="PS51860">
    <property type="entry name" value="REM_1"/>
    <property type="match status" value="2"/>
</dbReference>
<dbReference type="PROSITE" id="PS00479">
    <property type="entry name" value="ZF_DAG_PE_1"/>
    <property type="match status" value="2"/>
</dbReference>
<dbReference type="PROSITE" id="PS50081">
    <property type="entry name" value="ZF_DAG_PE_2"/>
    <property type="match status" value="2"/>
</dbReference>
<comment type="function">
    <text>Involved in the control of the cell shape. Target of the inhibitor staurosporine.</text>
</comment>
<comment type="catalytic activity">
    <reaction>
        <text>L-seryl-[protein] + ATP = O-phospho-L-seryl-[protein] + ADP + H(+)</text>
        <dbReference type="Rhea" id="RHEA:17989"/>
        <dbReference type="Rhea" id="RHEA-COMP:9863"/>
        <dbReference type="Rhea" id="RHEA-COMP:11604"/>
        <dbReference type="ChEBI" id="CHEBI:15378"/>
        <dbReference type="ChEBI" id="CHEBI:29999"/>
        <dbReference type="ChEBI" id="CHEBI:30616"/>
        <dbReference type="ChEBI" id="CHEBI:83421"/>
        <dbReference type="ChEBI" id="CHEBI:456216"/>
        <dbReference type="EC" id="2.7.11.13"/>
    </reaction>
</comment>
<comment type="catalytic activity">
    <reaction>
        <text>L-threonyl-[protein] + ATP = O-phospho-L-threonyl-[protein] + ADP + H(+)</text>
        <dbReference type="Rhea" id="RHEA:46608"/>
        <dbReference type="Rhea" id="RHEA-COMP:11060"/>
        <dbReference type="Rhea" id="RHEA-COMP:11605"/>
        <dbReference type="ChEBI" id="CHEBI:15378"/>
        <dbReference type="ChEBI" id="CHEBI:30013"/>
        <dbReference type="ChEBI" id="CHEBI:30616"/>
        <dbReference type="ChEBI" id="CHEBI:61977"/>
        <dbReference type="ChEBI" id="CHEBI:456216"/>
        <dbReference type="EC" id="2.7.11.13"/>
    </reaction>
</comment>
<comment type="subunit">
    <text evidence="8">Interacts with rho2.</text>
</comment>
<comment type="similarity">
    <text evidence="10">Belongs to the protein kinase superfamily. AGC Ser/Thr protein kinase family. PKC subfamily.</text>
</comment>
<proteinExistence type="evidence at protein level"/>
<sequence length="1016" mass="116005">MDMIDEAITEVVRKIERERSVIHGALSMKRLTQNQTVHQQLHSNIEESKKSIIYLEERLEKLKLRKNGVRKSNSEKPSVGIEKNPSFSTTKSAKSFSSTSSNIDSNLDLLNYDTPLTISKISFLLQQLEFKLSVEEQYRKGIEKMAKLYEREHDRRSIAEAEKKYVESAQKITLLKQALKRYHDLHIEIDEEDVPSTESRGNLNARRPQSGLLKITVGSLRNVTHSAGISKQTEMIVAIRAEDLERARTRPSRTDRFNETFEIDLEKTNEVEIVVYEKKNEKLLLPVGLLWIRLSDLVEKQRRKKVEQEVSDKGWVSADKMINQRLSIFLPSALNNISKPESTDRPNTASGNQSVSAWFSLEPMGQINLTMNFTKHNTRKRPMDAGLGRQGAIRQRKESVHEVYGHKFLQHQFYQIMRCALCGEFLKNAAGMQCIDCHYTCHKKCYPKVVTKCISKSSDSASSEYEKINHRIPHHFESHTNIGANWCCHCGYILPLGRKTARKCTECGITAHAQCVHLVPDFCGMSMEMANRVISEIRTTKIYKAQQHKQKSSHHKHHHHKKSKSSSSKHKENDKASVSITTTTTPSITPADPVPTSPKPLAIEPVKRKPVHAGNLEVTSVSDNKLGATVQVVEQKVDDKADALTKPPSLDAVKEPIPVPSVETSVVAQDLTHKAKRIGLEDFTFLSVLGKGNFGKVMLAELKSEKQLYAIKVLKKEFILENDEVESTKSEKRVFLVANRERHPFLVNLHSCFQTETRIYFVMDFVSGGDLMLHIQQEQFSRRRAQFYAAEVCLALKYFHDNGIIYRDLKLDNILLSPDGHVKVADYGLCKEDMWHDNTTATFCGTPEFMAPEILLEQQYTRSVDWWAFGVLIYQMLLGQSPFRGEDEEEIFDAILSDEPLYPIHMPRDSVSILQQLLTRDPKKRLGSGPNDAEDVMTHPFFSNINWDDIYHKRTQPPYIPSLNSPTDTKYFDEEFTRELPVLTPVNSILTKEMQQHFEGFSYSCEDDKPSTTDNA</sequence>
<organism>
    <name type="scientific">Schizosaccharomyces pombe (strain 972 / ATCC 24843)</name>
    <name type="common">Fission yeast</name>
    <dbReference type="NCBI Taxonomy" id="284812"/>
    <lineage>
        <taxon>Eukaryota</taxon>
        <taxon>Fungi</taxon>
        <taxon>Dikarya</taxon>
        <taxon>Ascomycota</taxon>
        <taxon>Taphrinomycotina</taxon>
        <taxon>Schizosaccharomycetes</taxon>
        <taxon>Schizosaccharomycetales</taxon>
        <taxon>Schizosaccharomycetaceae</taxon>
        <taxon>Schizosaccharomyces</taxon>
    </lineage>
</organism>
<gene>
    <name type="primary">pck2</name>
    <name type="synonym">pkc1</name>
    <name type="synonym">sts6</name>
    <name type="ORF">SPBC12D12.04c</name>
</gene>
<name>PCK2_SCHPO</name>
<keyword id="KW-0067">ATP-binding</keyword>
<keyword id="KW-0133">Cell shape</keyword>
<keyword id="KW-0175">Coiled coil</keyword>
<keyword id="KW-0418">Kinase</keyword>
<keyword id="KW-0479">Metal-binding</keyword>
<keyword id="KW-0547">Nucleotide-binding</keyword>
<keyword id="KW-0597">Phosphoprotein</keyword>
<keyword id="KW-1185">Reference proteome</keyword>
<keyword id="KW-0677">Repeat</keyword>
<keyword id="KW-0723">Serine/threonine-protein kinase</keyword>
<keyword id="KW-0808">Transferase</keyword>
<keyword id="KW-0862">Zinc</keyword>
<keyword id="KW-0863">Zinc-finger</keyword>
<evidence type="ECO:0000255" key="1">
    <source>
        <dbReference type="PROSITE-ProRule" id="PRU00041"/>
    </source>
</evidence>
<evidence type="ECO:0000255" key="2">
    <source>
        <dbReference type="PROSITE-ProRule" id="PRU00159"/>
    </source>
</evidence>
<evidence type="ECO:0000255" key="3">
    <source>
        <dbReference type="PROSITE-ProRule" id="PRU00226"/>
    </source>
</evidence>
<evidence type="ECO:0000255" key="4">
    <source>
        <dbReference type="PROSITE-ProRule" id="PRU00618"/>
    </source>
</evidence>
<evidence type="ECO:0000255" key="5">
    <source>
        <dbReference type="PROSITE-ProRule" id="PRU01207"/>
    </source>
</evidence>
<evidence type="ECO:0000255" key="6">
    <source>
        <dbReference type="PROSITE-ProRule" id="PRU10027"/>
    </source>
</evidence>
<evidence type="ECO:0000256" key="7">
    <source>
        <dbReference type="SAM" id="MobiDB-lite"/>
    </source>
</evidence>
<evidence type="ECO:0000269" key="8">
    <source>
    </source>
</evidence>
<evidence type="ECO:0000269" key="9">
    <source>
    </source>
</evidence>
<evidence type="ECO:0000305" key="10"/>
<accession>P36583</accession>
<accession>Q9UU42</accession>
<protein>
    <recommendedName>
        <fullName>Protein kinase C-like 2</fullName>
        <ecNumber>2.7.11.13</ecNumber>
    </recommendedName>
</protein>
<reference key="1">
    <citation type="journal article" date="1993" name="EMBO J.">
        <title>Two novel protein kinase C-related genes of fission yeast are essential for cell viability and implicated in cell shape control.</title>
        <authorList>
            <person name="Toda T."/>
            <person name="Shimanuki M."/>
            <person name="Yanagida M."/>
        </authorList>
    </citation>
    <scope>NUCLEOTIDE SEQUENCE [GENOMIC DNA]</scope>
</reference>
<reference key="2">
    <citation type="journal article" date="1993" name="J. Biol. Chem.">
        <title>A Ca(2+)-independent protein kinase C from fission yeast.</title>
        <authorList>
            <person name="Mazzei G.J."/>
            <person name="Schmid E.M."/>
            <person name="Knowles J.K."/>
            <person name="Payton M.A."/>
            <person name="Maundrell K.G."/>
        </authorList>
    </citation>
    <scope>NUCLEOTIDE SEQUENCE [GENOMIC DNA]</scope>
</reference>
<reference key="3">
    <citation type="journal article" date="2002" name="Nature">
        <title>The genome sequence of Schizosaccharomyces pombe.</title>
        <authorList>
            <person name="Wood V."/>
            <person name="Gwilliam R."/>
            <person name="Rajandream M.A."/>
            <person name="Lyne M.H."/>
            <person name="Lyne R."/>
            <person name="Stewart A."/>
            <person name="Sgouros J.G."/>
            <person name="Peat N."/>
            <person name="Hayles J."/>
            <person name="Baker S.G."/>
            <person name="Basham D."/>
            <person name="Bowman S."/>
            <person name="Brooks K."/>
            <person name="Brown D."/>
            <person name="Brown S."/>
            <person name="Chillingworth T."/>
            <person name="Churcher C.M."/>
            <person name="Collins M."/>
            <person name="Connor R."/>
            <person name="Cronin A."/>
            <person name="Davis P."/>
            <person name="Feltwell T."/>
            <person name="Fraser A."/>
            <person name="Gentles S."/>
            <person name="Goble A."/>
            <person name="Hamlin N."/>
            <person name="Harris D.E."/>
            <person name="Hidalgo J."/>
            <person name="Hodgson G."/>
            <person name="Holroyd S."/>
            <person name="Hornsby T."/>
            <person name="Howarth S."/>
            <person name="Huckle E.J."/>
            <person name="Hunt S."/>
            <person name="Jagels K."/>
            <person name="James K.D."/>
            <person name="Jones L."/>
            <person name="Jones M."/>
            <person name="Leather S."/>
            <person name="McDonald S."/>
            <person name="McLean J."/>
            <person name="Mooney P."/>
            <person name="Moule S."/>
            <person name="Mungall K.L."/>
            <person name="Murphy L.D."/>
            <person name="Niblett D."/>
            <person name="Odell C."/>
            <person name="Oliver K."/>
            <person name="O'Neil S."/>
            <person name="Pearson D."/>
            <person name="Quail M.A."/>
            <person name="Rabbinowitsch E."/>
            <person name="Rutherford K.M."/>
            <person name="Rutter S."/>
            <person name="Saunders D."/>
            <person name="Seeger K."/>
            <person name="Sharp S."/>
            <person name="Skelton J."/>
            <person name="Simmonds M.N."/>
            <person name="Squares R."/>
            <person name="Squares S."/>
            <person name="Stevens K."/>
            <person name="Taylor K."/>
            <person name="Taylor R.G."/>
            <person name="Tivey A."/>
            <person name="Walsh S.V."/>
            <person name="Warren T."/>
            <person name="Whitehead S."/>
            <person name="Woodward J.R."/>
            <person name="Volckaert G."/>
            <person name="Aert R."/>
            <person name="Robben J."/>
            <person name="Grymonprez B."/>
            <person name="Weltjens I."/>
            <person name="Vanstreels E."/>
            <person name="Rieger M."/>
            <person name="Schaefer M."/>
            <person name="Mueller-Auer S."/>
            <person name="Gabel C."/>
            <person name="Fuchs M."/>
            <person name="Duesterhoeft A."/>
            <person name="Fritzc C."/>
            <person name="Holzer E."/>
            <person name="Moestl D."/>
            <person name="Hilbert H."/>
            <person name="Borzym K."/>
            <person name="Langer I."/>
            <person name="Beck A."/>
            <person name="Lehrach H."/>
            <person name="Reinhardt R."/>
            <person name="Pohl T.M."/>
            <person name="Eger P."/>
            <person name="Zimmermann W."/>
            <person name="Wedler H."/>
            <person name="Wambutt R."/>
            <person name="Purnelle B."/>
            <person name="Goffeau A."/>
            <person name="Cadieu E."/>
            <person name="Dreano S."/>
            <person name="Gloux S."/>
            <person name="Lelaure V."/>
            <person name="Mottier S."/>
            <person name="Galibert F."/>
            <person name="Aves S.J."/>
            <person name="Xiang Z."/>
            <person name="Hunt C."/>
            <person name="Moore K."/>
            <person name="Hurst S.M."/>
            <person name="Lucas M."/>
            <person name="Rochet M."/>
            <person name="Gaillardin C."/>
            <person name="Tallada V.A."/>
            <person name="Garzon A."/>
            <person name="Thode G."/>
            <person name="Daga R.R."/>
            <person name="Cruzado L."/>
            <person name="Jimenez J."/>
            <person name="Sanchez M."/>
            <person name="del Rey F."/>
            <person name="Benito J."/>
            <person name="Dominguez A."/>
            <person name="Revuelta J.L."/>
            <person name="Moreno S."/>
            <person name="Armstrong J."/>
            <person name="Forsburg S.L."/>
            <person name="Cerutti L."/>
            <person name="Lowe T."/>
            <person name="McCombie W.R."/>
            <person name="Paulsen I."/>
            <person name="Potashkin J."/>
            <person name="Shpakovski G.V."/>
            <person name="Ussery D."/>
            <person name="Barrell B.G."/>
            <person name="Nurse P."/>
        </authorList>
    </citation>
    <scope>NUCLEOTIDE SEQUENCE [LARGE SCALE GENOMIC DNA]</scope>
    <source>
        <strain>972 / ATCC 24843</strain>
    </source>
</reference>
<reference key="4">
    <citation type="journal article" date="2000" name="Genes Cells">
        <title>Large-scale screening of intracellular protein localization in living fission yeast cells by the use of a GFP-fusion genomic DNA library.</title>
        <authorList>
            <person name="Ding D.-Q."/>
            <person name="Tomita Y."/>
            <person name="Yamamoto A."/>
            <person name="Chikashige Y."/>
            <person name="Haraguchi T."/>
            <person name="Hiraoka Y."/>
        </authorList>
    </citation>
    <scope>NUCLEOTIDE SEQUENCE [LARGE SCALE GENOMIC DNA] OF 755-928</scope>
    <source>
        <strain>ATCC 38364 / 968</strain>
    </source>
</reference>
<reference key="5">
    <citation type="journal article" date="2000" name="Mol. Biol. Cell">
        <title>Schizosaccharomyces pombe rho2p GTPase regulates cell wall alpha-glucan biosynthesis through the protein kinase pck2p.</title>
        <authorList>
            <person name="Calonge T.M."/>
            <person name="Nakano K."/>
            <person name="Arellano M."/>
            <person name="Arai R."/>
            <person name="Katayama S."/>
            <person name="Toda T."/>
            <person name="Mabuchi I."/>
            <person name="Perez P."/>
        </authorList>
    </citation>
    <scope>INTERACTION WITH RHO2</scope>
</reference>
<reference key="6">
    <citation type="journal article" date="2008" name="J. Proteome Res.">
        <title>Phosphoproteome analysis of fission yeast.</title>
        <authorList>
            <person name="Wilson-Grady J.T."/>
            <person name="Villen J."/>
            <person name="Gygi S.P."/>
        </authorList>
    </citation>
    <scope>PHOSPHORYLATION [LARGE SCALE ANALYSIS] AT THR-984</scope>
    <scope>IDENTIFICATION BY MASS SPECTROMETRY</scope>
</reference>
<feature type="chain" id="PRO_0000055741" description="Protein kinase C-like 2">
    <location>
        <begin position="1"/>
        <end position="1016"/>
    </location>
</feature>
<feature type="domain" description="REM-1 1" evidence="5">
    <location>
        <begin position="1"/>
        <end position="68"/>
    </location>
</feature>
<feature type="domain" description="REM-1 2" evidence="5">
    <location>
        <begin position="111"/>
        <end position="188"/>
    </location>
</feature>
<feature type="domain" description="C2" evidence="1">
    <location>
        <begin position="195"/>
        <end position="307"/>
    </location>
</feature>
<feature type="domain" description="Protein kinase" evidence="2">
    <location>
        <begin position="683"/>
        <end position="942"/>
    </location>
</feature>
<feature type="domain" description="AGC-kinase C-terminal" evidence="4">
    <location>
        <begin position="943"/>
        <end position="1013"/>
    </location>
</feature>
<feature type="zinc finger region" description="Phorbol-ester/DAG-type 1" evidence="3">
    <location>
        <begin position="405"/>
        <end position="453"/>
    </location>
</feature>
<feature type="zinc finger region" description="Phorbol-ester/DAG-type 2" evidence="3">
    <location>
        <begin position="473"/>
        <end position="523"/>
    </location>
</feature>
<feature type="region of interest" description="Disordered" evidence="7">
    <location>
        <begin position="68"/>
        <end position="101"/>
    </location>
</feature>
<feature type="region of interest" description="Disordered" evidence="7">
    <location>
        <begin position="543"/>
        <end position="602"/>
    </location>
</feature>
<feature type="compositionally biased region" description="Low complexity" evidence="7">
    <location>
        <begin position="86"/>
        <end position="101"/>
    </location>
</feature>
<feature type="compositionally biased region" description="Basic residues" evidence="7">
    <location>
        <begin position="546"/>
        <end position="568"/>
    </location>
</feature>
<feature type="compositionally biased region" description="Low complexity" evidence="7">
    <location>
        <begin position="579"/>
        <end position="590"/>
    </location>
</feature>
<feature type="active site" description="Proton acceptor" evidence="2 6">
    <location>
        <position position="808"/>
    </location>
</feature>
<feature type="binding site" evidence="2">
    <location>
        <begin position="689"/>
        <end position="697"/>
    </location>
    <ligand>
        <name>ATP</name>
        <dbReference type="ChEBI" id="CHEBI:30616"/>
    </ligand>
</feature>
<feature type="binding site" evidence="2">
    <location>
        <position position="712"/>
    </location>
    <ligand>
        <name>ATP</name>
        <dbReference type="ChEBI" id="CHEBI:30616"/>
    </ligand>
</feature>
<feature type="modified residue" description="Phosphothreonine" evidence="9">
    <location>
        <position position="984"/>
    </location>
</feature>
<feature type="sequence conflict" description="In Ref. 1; BAA03268." evidence="10" ref="1">
    <original>E</original>
    <variation>V</variation>
    <location>
        <position position="152"/>
    </location>
</feature>